<name>PANC_COXBR</name>
<gene>
    <name evidence="1" type="primary">panC</name>
    <name type="ordered locus">COXBURSA331_A0530</name>
</gene>
<feature type="chain" id="PRO_1000097056" description="Pantothenate synthetase">
    <location>
        <begin position="1"/>
        <end position="257"/>
    </location>
</feature>
<feature type="active site" description="Proton donor" evidence="1">
    <location>
        <position position="36"/>
    </location>
</feature>
<feature type="binding site" evidence="1">
    <location>
        <begin position="29"/>
        <end position="36"/>
    </location>
    <ligand>
        <name>ATP</name>
        <dbReference type="ChEBI" id="CHEBI:30616"/>
    </ligand>
</feature>
<feature type="binding site" evidence="1">
    <location>
        <position position="60"/>
    </location>
    <ligand>
        <name>(R)-pantoate</name>
        <dbReference type="ChEBI" id="CHEBI:15980"/>
    </ligand>
</feature>
<feature type="binding site" evidence="1">
    <location>
        <position position="60"/>
    </location>
    <ligand>
        <name>beta-alanine</name>
        <dbReference type="ChEBI" id="CHEBI:57966"/>
    </ligand>
</feature>
<feature type="binding site" evidence="1">
    <location>
        <begin position="145"/>
        <end position="148"/>
    </location>
    <ligand>
        <name>ATP</name>
        <dbReference type="ChEBI" id="CHEBI:30616"/>
    </ligand>
</feature>
<feature type="binding site" evidence="1">
    <location>
        <position position="151"/>
    </location>
    <ligand>
        <name>(R)-pantoate</name>
        <dbReference type="ChEBI" id="CHEBI:15980"/>
    </ligand>
</feature>
<feature type="binding site" evidence="1">
    <location>
        <position position="174"/>
    </location>
    <ligand>
        <name>ATP</name>
        <dbReference type="ChEBI" id="CHEBI:30616"/>
    </ligand>
</feature>
<feature type="binding site" evidence="1">
    <location>
        <begin position="182"/>
        <end position="185"/>
    </location>
    <ligand>
        <name>ATP</name>
        <dbReference type="ChEBI" id="CHEBI:30616"/>
    </ligand>
</feature>
<organism>
    <name type="scientific">Coxiella burnetii (strain RSA 331 / Henzerling II)</name>
    <dbReference type="NCBI Taxonomy" id="360115"/>
    <lineage>
        <taxon>Bacteria</taxon>
        <taxon>Pseudomonadati</taxon>
        <taxon>Pseudomonadota</taxon>
        <taxon>Gammaproteobacteria</taxon>
        <taxon>Legionellales</taxon>
        <taxon>Coxiellaceae</taxon>
        <taxon>Coxiella</taxon>
    </lineage>
</organism>
<accession>A9NBP1</accession>
<evidence type="ECO:0000255" key="1">
    <source>
        <dbReference type="HAMAP-Rule" id="MF_00158"/>
    </source>
</evidence>
<dbReference type="EC" id="6.3.2.1" evidence="1"/>
<dbReference type="EMBL" id="CP000890">
    <property type="protein sequence ID" value="ABX78883.1"/>
    <property type="molecule type" value="Genomic_DNA"/>
</dbReference>
<dbReference type="RefSeq" id="WP_005771941.1">
    <property type="nucleotide sequence ID" value="NC_010117.1"/>
</dbReference>
<dbReference type="SMR" id="A9NBP1"/>
<dbReference type="KEGG" id="cbs:COXBURSA331_A0530"/>
<dbReference type="HOGENOM" id="CLU_047148_0_0_6"/>
<dbReference type="UniPathway" id="UPA00028">
    <property type="reaction ID" value="UER00005"/>
</dbReference>
<dbReference type="GO" id="GO:0005829">
    <property type="term" value="C:cytosol"/>
    <property type="evidence" value="ECO:0007669"/>
    <property type="project" value="TreeGrafter"/>
</dbReference>
<dbReference type="GO" id="GO:0005524">
    <property type="term" value="F:ATP binding"/>
    <property type="evidence" value="ECO:0007669"/>
    <property type="project" value="UniProtKB-KW"/>
</dbReference>
<dbReference type="GO" id="GO:0004592">
    <property type="term" value="F:pantoate-beta-alanine ligase activity"/>
    <property type="evidence" value="ECO:0007669"/>
    <property type="project" value="UniProtKB-UniRule"/>
</dbReference>
<dbReference type="GO" id="GO:0015940">
    <property type="term" value="P:pantothenate biosynthetic process"/>
    <property type="evidence" value="ECO:0007669"/>
    <property type="project" value="UniProtKB-UniRule"/>
</dbReference>
<dbReference type="Gene3D" id="3.40.50.620">
    <property type="entry name" value="HUPs"/>
    <property type="match status" value="1"/>
</dbReference>
<dbReference type="Gene3D" id="3.30.1300.10">
    <property type="entry name" value="Pantoate-beta-alanine ligase, C-terminal domain"/>
    <property type="match status" value="1"/>
</dbReference>
<dbReference type="HAMAP" id="MF_00158">
    <property type="entry name" value="PanC"/>
    <property type="match status" value="1"/>
</dbReference>
<dbReference type="InterPro" id="IPR003721">
    <property type="entry name" value="Pantoate_ligase"/>
</dbReference>
<dbReference type="InterPro" id="IPR042176">
    <property type="entry name" value="Pantoate_ligase_C"/>
</dbReference>
<dbReference type="InterPro" id="IPR014729">
    <property type="entry name" value="Rossmann-like_a/b/a_fold"/>
</dbReference>
<dbReference type="NCBIfam" id="TIGR00018">
    <property type="entry name" value="panC"/>
    <property type="match status" value="1"/>
</dbReference>
<dbReference type="PANTHER" id="PTHR21299">
    <property type="entry name" value="CYTIDYLATE KINASE/PANTOATE-BETA-ALANINE LIGASE"/>
    <property type="match status" value="1"/>
</dbReference>
<dbReference type="PANTHER" id="PTHR21299:SF1">
    <property type="entry name" value="PANTOATE--BETA-ALANINE LIGASE"/>
    <property type="match status" value="1"/>
</dbReference>
<dbReference type="Pfam" id="PF02569">
    <property type="entry name" value="Pantoate_ligase"/>
    <property type="match status" value="1"/>
</dbReference>
<dbReference type="SUPFAM" id="SSF52374">
    <property type="entry name" value="Nucleotidylyl transferase"/>
    <property type="match status" value="1"/>
</dbReference>
<keyword id="KW-0067">ATP-binding</keyword>
<keyword id="KW-0963">Cytoplasm</keyword>
<keyword id="KW-0436">Ligase</keyword>
<keyword id="KW-0547">Nucleotide-binding</keyword>
<keyword id="KW-0566">Pantothenate biosynthesis</keyword>
<reference key="1">
    <citation type="submission" date="2007-11" db="EMBL/GenBank/DDBJ databases">
        <title>Genome sequencing of phylogenetically and phenotypically diverse Coxiella burnetii isolates.</title>
        <authorList>
            <person name="Seshadri R."/>
            <person name="Samuel J.E."/>
        </authorList>
    </citation>
    <scope>NUCLEOTIDE SEQUENCE [LARGE SCALE GENOMIC DNA]</scope>
    <source>
        <strain>RSA 331 / Henzerling II</strain>
    </source>
</reference>
<sequence length="257" mass="29479">MTKVIEALSDWQSIRKTINDLSVGFVPTMGNLHAGHLSLLERSKCENTITVLSLFINPTQFNDKNDFKNYPRTLAQDIAMAEENGIDYVLAPTDDALYPDQYAYKITNSTINNQEAEFRPRHFDGVLTVVMKLLLLVKPTRAYFGEKDYQQLQLVKGLAEAFFLDTEIIGCKIVRNEFGLPLSSRNRRLTEDQYQLAQRFSEIFHSDLSCDEIKNALIQEGIIVDYIEDYNERRFAAVHVGDIRLIDNIPFAKDKKC</sequence>
<comment type="function">
    <text evidence="1">Catalyzes the condensation of pantoate with beta-alanine in an ATP-dependent reaction via a pantoyl-adenylate intermediate.</text>
</comment>
<comment type="catalytic activity">
    <reaction evidence="1">
        <text>(R)-pantoate + beta-alanine + ATP = (R)-pantothenate + AMP + diphosphate + H(+)</text>
        <dbReference type="Rhea" id="RHEA:10912"/>
        <dbReference type="ChEBI" id="CHEBI:15378"/>
        <dbReference type="ChEBI" id="CHEBI:15980"/>
        <dbReference type="ChEBI" id="CHEBI:29032"/>
        <dbReference type="ChEBI" id="CHEBI:30616"/>
        <dbReference type="ChEBI" id="CHEBI:33019"/>
        <dbReference type="ChEBI" id="CHEBI:57966"/>
        <dbReference type="ChEBI" id="CHEBI:456215"/>
        <dbReference type="EC" id="6.3.2.1"/>
    </reaction>
</comment>
<comment type="pathway">
    <text evidence="1">Cofactor biosynthesis; (R)-pantothenate biosynthesis; (R)-pantothenate from (R)-pantoate and beta-alanine: step 1/1.</text>
</comment>
<comment type="subunit">
    <text evidence="1">Homodimer.</text>
</comment>
<comment type="subcellular location">
    <subcellularLocation>
        <location evidence="1">Cytoplasm</location>
    </subcellularLocation>
</comment>
<comment type="miscellaneous">
    <text evidence="1">The reaction proceeds by a bi uni uni bi ping pong mechanism.</text>
</comment>
<comment type="similarity">
    <text evidence="1">Belongs to the pantothenate synthetase family.</text>
</comment>
<protein>
    <recommendedName>
        <fullName evidence="1">Pantothenate synthetase</fullName>
        <shortName evidence="1">PS</shortName>
        <ecNumber evidence="1">6.3.2.1</ecNumber>
    </recommendedName>
    <alternativeName>
        <fullName evidence="1">Pantoate--beta-alanine ligase</fullName>
    </alternativeName>
    <alternativeName>
        <fullName evidence="1">Pantoate-activating enzyme</fullName>
    </alternativeName>
</protein>
<proteinExistence type="inferred from homology"/>